<name>SPT16_NEUCR</name>
<reference key="1">
    <citation type="journal article" date="2003" name="Nucleic Acids Res.">
        <title>What's in the genome of a filamentous fungus? Analysis of the Neurospora genome sequence.</title>
        <authorList>
            <person name="Mannhaupt G."/>
            <person name="Montrone C."/>
            <person name="Haase D."/>
            <person name="Mewes H.-W."/>
            <person name="Aign V."/>
            <person name="Hoheisel J.D."/>
            <person name="Fartmann B."/>
            <person name="Nyakatura G."/>
            <person name="Kempken F."/>
            <person name="Maier J."/>
            <person name="Schulte U."/>
        </authorList>
    </citation>
    <scope>NUCLEOTIDE SEQUENCE [LARGE SCALE GENOMIC DNA]</scope>
    <source>
        <strain>ATCC 24698 / 74-OR23-1A / CBS 708.71 / DSM 1257 / FGSC 987</strain>
    </source>
</reference>
<reference key="2">
    <citation type="journal article" date="2003" name="Nature">
        <title>The genome sequence of the filamentous fungus Neurospora crassa.</title>
        <authorList>
            <person name="Galagan J.E."/>
            <person name="Calvo S.E."/>
            <person name="Borkovich K.A."/>
            <person name="Selker E.U."/>
            <person name="Read N.D."/>
            <person name="Jaffe D.B."/>
            <person name="FitzHugh W."/>
            <person name="Ma L.-J."/>
            <person name="Smirnov S."/>
            <person name="Purcell S."/>
            <person name="Rehman B."/>
            <person name="Elkins T."/>
            <person name="Engels R."/>
            <person name="Wang S."/>
            <person name="Nielsen C.B."/>
            <person name="Butler J."/>
            <person name="Endrizzi M."/>
            <person name="Qui D."/>
            <person name="Ianakiev P."/>
            <person name="Bell-Pedersen D."/>
            <person name="Nelson M.A."/>
            <person name="Werner-Washburne M."/>
            <person name="Selitrennikoff C.P."/>
            <person name="Kinsey J.A."/>
            <person name="Braun E.L."/>
            <person name="Zelter A."/>
            <person name="Schulte U."/>
            <person name="Kothe G.O."/>
            <person name="Jedd G."/>
            <person name="Mewes H.-W."/>
            <person name="Staben C."/>
            <person name="Marcotte E."/>
            <person name="Greenberg D."/>
            <person name="Roy A."/>
            <person name="Foley K."/>
            <person name="Naylor J."/>
            <person name="Stange-Thomann N."/>
            <person name="Barrett R."/>
            <person name="Gnerre S."/>
            <person name="Kamal M."/>
            <person name="Kamvysselis M."/>
            <person name="Mauceli E.W."/>
            <person name="Bielke C."/>
            <person name="Rudd S."/>
            <person name="Frishman D."/>
            <person name="Krystofova S."/>
            <person name="Rasmussen C."/>
            <person name="Metzenberg R.L."/>
            <person name="Perkins D.D."/>
            <person name="Kroken S."/>
            <person name="Cogoni C."/>
            <person name="Macino G."/>
            <person name="Catcheside D.E.A."/>
            <person name="Li W."/>
            <person name="Pratt R.J."/>
            <person name="Osmani S.A."/>
            <person name="DeSouza C.P.C."/>
            <person name="Glass N.L."/>
            <person name="Orbach M.J."/>
            <person name="Berglund J.A."/>
            <person name="Voelker R."/>
            <person name="Yarden O."/>
            <person name="Plamann M."/>
            <person name="Seiler S."/>
            <person name="Dunlap J.C."/>
            <person name="Radford A."/>
            <person name="Aramayo R."/>
            <person name="Natvig D.O."/>
            <person name="Alex L.A."/>
            <person name="Mannhaupt G."/>
            <person name="Ebbole D.J."/>
            <person name="Freitag M."/>
            <person name="Paulsen I."/>
            <person name="Sachs M.S."/>
            <person name="Lander E.S."/>
            <person name="Nusbaum C."/>
            <person name="Birren B.W."/>
        </authorList>
    </citation>
    <scope>NUCLEOTIDE SEQUENCE [LARGE SCALE GENOMIC DNA]</scope>
    <source>
        <strain>ATCC 24698 / 74-OR23-1A / CBS 708.71 / DSM 1257 / FGSC 987</strain>
    </source>
</reference>
<feature type="chain" id="PRO_0000245187" description="FACT complex subunit ctc-2">
    <location>
        <begin position="1"/>
        <end position="1032"/>
    </location>
</feature>
<feature type="region of interest" description="Disordered" evidence="3">
    <location>
        <begin position="446"/>
        <end position="513"/>
    </location>
</feature>
<feature type="region of interest" description="Disordered" evidence="3">
    <location>
        <begin position="943"/>
        <end position="1032"/>
    </location>
</feature>
<feature type="coiled-coil region" evidence="2">
    <location>
        <begin position="485"/>
        <end position="506"/>
    </location>
</feature>
<feature type="coiled-coil region" evidence="2">
    <location>
        <begin position="624"/>
        <end position="658"/>
    </location>
</feature>
<feature type="coiled-coil region" evidence="2">
    <location>
        <begin position="785"/>
        <end position="805"/>
    </location>
</feature>
<feature type="coiled-coil region" evidence="2">
    <location>
        <begin position="949"/>
        <end position="1010"/>
    </location>
</feature>
<feature type="compositionally biased region" description="Basic and acidic residues" evidence="3">
    <location>
        <begin position="476"/>
        <end position="508"/>
    </location>
</feature>
<feature type="compositionally biased region" description="Acidic residues" evidence="3">
    <location>
        <begin position="944"/>
        <end position="979"/>
    </location>
</feature>
<feature type="compositionally biased region" description="Acidic residues" evidence="3">
    <location>
        <begin position="986"/>
        <end position="1004"/>
    </location>
</feature>
<organism>
    <name type="scientific">Neurospora crassa (strain ATCC 24698 / 74-OR23-1A / CBS 708.71 / DSM 1257 / FGSC 987)</name>
    <dbReference type="NCBI Taxonomy" id="367110"/>
    <lineage>
        <taxon>Eukaryota</taxon>
        <taxon>Fungi</taxon>
        <taxon>Dikarya</taxon>
        <taxon>Ascomycota</taxon>
        <taxon>Pezizomycotina</taxon>
        <taxon>Sordariomycetes</taxon>
        <taxon>Sordariomycetidae</taxon>
        <taxon>Sordariales</taxon>
        <taxon>Sordariaceae</taxon>
        <taxon>Neurospora</taxon>
    </lineage>
</organism>
<keyword id="KW-0158">Chromosome</keyword>
<keyword id="KW-0175">Coiled coil</keyword>
<keyword id="KW-0227">DNA damage</keyword>
<keyword id="KW-0234">DNA repair</keyword>
<keyword id="KW-0235">DNA replication</keyword>
<keyword id="KW-0539">Nucleus</keyword>
<keyword id="KW-1185">Reference proteome</keyword>
<keyword id="KW-0804">Transcription</keyword>
<keyword id="KW-0805">Transcription regulation</keyword>
<comment type="function">
    <text evidence="1">Component of the FACT complex, a general chromatin factor that acts to reorganize nucleosomes. The FACT complex is involved in multiple processes that require DNA as a template such as mRNA elongation, DNA replication and DNA repair. During transcription elongation the FACT complex acts as a histone chaperone that both destabilizes and restores nucleosomal structure. It facilitates the passage of RNA polymerase II and transcription by promoting the dissociation of one histone H2A-H2B dimer from the nucleosome, then subsequently promotes the reestablishment of the nucleosome following the passage of RNA polymerase II (By similarity).</text>
</comment>
<comment type="subunit">
    <text evidence="1">Forms a stable heterodimer with ctc-1/pob3. The dimer of ctc-1 and ctc-2 weakly associates with multiple molecules of nhp-1/nhp6 to form the FACT complex (By similarity).</text>
</comment>
<comment type="subcellular location">
    <subcellularLocation>
        <location evidence="1">Nucleus</location>
    </subcellularLocation>
    <subcellularLocation>
        <location evidence="1">Chromosome</location>
    </subcellularLocation>
</comment>
<comment type="similarity">
    <text evidence="4">Belongs to the peptidase M24 family. SPT16 subfamily.</text>
</comment>
<comment type="caution">
    <text evidence="4">Although related to the peptidase M24 family, this protein lacks conserved active site residues suggesting that it may lack peptidase activity.</text>
</comment>
<accession>Q8X0X6</accession>
<dbReference type="EMBL" id="AL670009">
    <property type="protein sequence ID" value="CAD21367.1"/>
    <property type="molecule type" value="Genomic_DNA"/>
</dbReference>
<dbReference type="EMBL" id="CM002240">
    <property type="protein sequence ID" value="EAA32294.3"/>
    <property type="molecule type" value="Genomic_DNA"/>
</dbReference>
<dbReference type="RefSeq" id="XP_961530.3">
    <property type="nucleotide sequence ID" value="XM_956437.3"/>
</dbReference>
<dbReference type="SMR" id="Q8X0X6"/>
<dbReference type="FunCoup" id="Q8X0X6">
    <property type="interactions" value="1260"/>
</dbReference>
<dbReference type="STRING" id="367110.Q8X0X6"/>
<dbReference type="PaxDb" id="5141-EFNCRP00000004253"/>
<dbReference type="EnsemblFungi" id="EAA32294">
    <property type="protein sequence ID" value="EAA32294"/>
    <property type="gene ID" value="NCU01164"/>
</dbReference>
<dbReference type="GeneID" id="3877710"/>
<dbReference type="KEGG" id="ncr:NCU01164"/>
<dbReference type="VEuPathDB" id="FungiDB:NCU01164"/>
<dbReference type="HOGENOM" id="CLU_004627_1_0_1"/>
<dbReference type="InParanoid" id="Q8X0X6"/>
<dbReference type="OrthoDB" id="10251642at2759"/>
<dbReference type="Proteomes" id="UP000001805">
    <property type="component" value="Chromosome 2, Linkage Group V"/>
</dbReference>
<dbReference type="GO" id="GO:0035101">
    <property type="term" value="C:FACT complex"/>
    <property type="evidence" value="ECO:0000318"/>
    <property type="project" value="GO_Central"/>
</dbReference>
<dbReference type="GO" id="GO:0042393">
    <property type="term" value="F:histone binding"/>
    <property type="evidence" value="ECO:0007669"/>
    <property type="project" value="EnsemblFungi"/>
</dbReference>
<dbReference type="GO" id="GO:0140713">
    <property type="term" value="F:histone chaperone activity"/>
    <property type="evidence" value="ECO:0007669"/>
    <property type="project" value="EnsemblFungi"/>
</dbReference>
<dbReference type="GO" id="GO:0031491">
    <property type="term" value="F:nucleosome binding"/>
    <property type="evidence" value="ECO:0000318"/>
    <property type="project" value="GO_Central"/>
</dbReference>
<dbReference type="GO" id="GO:0140719">
    <property type="term" value="P:constitutive heterochromatin formation"/>
    <property type="evidence" value="ECO:0007669"/>
    <property type="project" value="EnsemblFungi"/>
</dbReference>
<dbReference type="GO" id="GO:0006281">
    <property type="term" value="P:DNA repair"/>
    <property type="evidence" value="ECO:0007669"/>
    <property type="project" value="UniProtKB-KW"/>
</dbReference>
<dbReference type="GO" id="GO:0006261">
    <property type="term" value="P:DNA-templated DNA replication"/>
    <property type="evidence" value="ECO:0007669"/>
    <property type="project" value="EnsemblFungi"/>
</dbReference>
<dbReference type="GO" id="GO:0006334">
    <property type="term" value="P:nucleosome assembly"/>
    <property type="evidence" value="ECO:0007669"/>
    <property type="project" value="EnsemblFungi"/>
</dbReference>
<dbReference type="GO" id="GO:0045899">
    <property type="term" value="P:positive regulation of RNA polymerase II transcription preinitiation complex assembly"/>
    <property type="evidence" value="ECO:0007669"/>
    <property type="project" value="EnsemblFungi"/>
</dbReference>
<dbReference type="GO" id="GO:0007063">
    <property type="term" value="P:regulation of sister chromatid cohesion"/>
    <property type="evidence" value="ECO:0007669"/>
    <property type="project" value="EnsemblFungi"/>
</dbReference>
<dbReference type="GO" id="GO:0006368">
    <property type="term" value="P:transcription elongation by RNA polymerase II"/>
    <property type="evidence" value="ECO:0000318"/>
    <property type="project" value="GO_Central"/>
</dbReference>
<dbReference type="CDD" id="cd01091">
    <property type="entry name" value="CDC68-like"/>
    <property type="match status" value="1"/>
</dbReference>
<dbReference type="FunFam" id="2.30.29.150:FF:000002">
    <property type="entry name" value="FACT complex subunit SPT16"/>
    <property type="match status" value="1"/>
</dbReference>
<dbReference type="FunFam" id="2.30.29.30:FF:000017">
    <property type="entry name" value="FACT complex subunit SPT16"/>
    <property type="match status" value="1"/>
</dbReference>
<dbReference type="FunFam" id="3.40.350.10:FF:000006">
    <property type="entry name" value="FACT complex subunit SPT16"/>
    <property type="match status" value="1"/>
</dbReference>
<dbReference type="FunFam" id="2.30.29.210:FF:000001">
    <property type="entry name" value="FACT complex subunit spt16"/>
    <property type="match status" value="1"/>
</dbReference>
<dbReference type="FunFam" id="3.90.230.10:FF:000005">
    <property type="entry name" value="FACT complex subunit spt16"/>
    <property type="match status" value="1"/>
</dbReference>
<dbReference type="Gene3D" id="2.30.29.150">
    <property type="match status" value="1"/>
</dbReference>
<dbReference type="Gene3D" id="3.90.230.10">
    <property type="entry name" value="Creatinase/methionine aminopeptidase superfamily"/>
    <property type="match status" value="1"/>
</dbReference>
<dbReference type="Gene3D" id="3.40.350.10">
    <property type="entry name" value="Creatinase/prolidase N-terminal domain"/>
    <property type="match status" value="1"/>
</dbReference>
<dbReference type="Gene3D" id="2.30.29.210">
    <property type="entry name" value="FACT complex subunit Spt16p/Cdc68p"/>
    <property type="match status" value="1"/>
</dbReference>
<dbReference type="Gene3D" id="2.30.29.30">
    <property type="entry name" value="Pleckstrin-homology domain (PH domain)/Phosphotyrosine-binding domain (PTB)"/>
    <property type="match status" value="1"/>
</dbReference>
<dbReference type="InterPro" id="IPR029149">
    <property type="entry name" value="Creatin/AminoP/Spt16_N"/>
</dbReference>
<dbReference type="InterPro" id="IPR036005">
    <property type="entry name" value="Creatinase/aminopeptidase-like"/>
</dbReference>
<dbReference type="InterPro" id="IPR029148">
    <property type="entry name" value="FACT-SPT16_Nlobe"/>
</dbReference>
<dbReference type="InterPro" id="IPR056595">
    <property type="entry name" value="Fact-SPT16_PH"/>
</dbReference>
<dbReference type="InterPro" id="IPR048969">
    <property type="entry name" value="FACT_SPT16_C"/>
</dbReference>
<dbReference type="InterPro" id="IPR013953">
    <property type="entry name" value="FACT_SPT16_M"/>
</dbReference>
<dbReference type="InterPro" id="IPR000994">
    <property type="entry name" value="Pept_M24"/>
</dbReference>
<dbReference type="InterPro" id="IPR011993">
    <property type="entry name" value="PH-like_dom_sf"/>
</dbReference>
<dbReference type="InterPro" id="IPR013719">
    <property type="entry name" value="RTT106/SPT16-like_middle_dom"/>
</dbReference>
<dbReference type="InterPro" id="IPR040258">
    <property type="entry name" value="Spt16"/>
</dbReference>
<dbReference type="InterPro" id="IPR033825">
    <property type="entry name" value="Spt16_M24"/>
</dbReference>
<dbReference type="PANTHER" id="PTHR13980">
    <property type="entry name" value="CDC68 RELATED"/>
    <property type="match status" value="1"/>
</dbReference>
<dbReference type="PANTHER" id="PTHR13980:SF15">
    <property type="entry name" value="FACT COMPLEX SUBUNIT SPT16"/>
    <property type="match status" value="1"/>
</dbReference>
<dbReference type="Pfam" id="PF14826">
    <property type="entry name" value="FACT-Spt16_Nlob"/>
    <property type="match status" value="1"/>
</dbReference>
<dbReference type="Pfam" id="PF00557">
    <property type="entry name" value="Peptidase_M24"/>
    <property type="match status" value="1"/>
</dbReference>
<dbReference type="Pfam" id="PF24824">
    <property type="entry name" value="PH_SPT16"/>
    <property type="match status" value="1"/>
</dbReference>
<dbReference type="Pfam" id="PF08512">
    <property type="entry name" value="Rttp106-like_middle"/>
    <property type="match status" value="1"/>
</dbReference>
<dbReference type="Pfam" id="PF08644">
    <property type="entry name" value="SPT16"/>
    <property type="match status" value="1"/>
</dbReference>
<dbReference type="Pfam" id="PF21091">
    <property type="entry name" value="SPT16_C"/>
    <property type="match status" value="1"/>
</dbReference>
<dbReference type="SMART" id="SM01285">
    <property type="entry name" value="FACT-Spt16_Nlob"/>
    <property type="match status" value="1"/>
</dbReference>
<dbReference type="SMART" id="SM01287">
    <property type="entry name" value="Rtt106"/>
    <property type="match status" value="1"/>
</dbReference>
<dbReference type="SMART" id="SM01286">
    <property type="entry name" value="SPT16"/>
    <property type="match status" value="1"/>
</dbReference>
<dbReference type="SUPFAM" id="SSF55920">
    <property type="entry name" value="Creatinase/aminopeptidase"/>
    <property type="match status" value="1"/>
</dbReference>
<proteinExistence type="inferred from homology"/>
<evidence type="ECO:0000250" key="1"/>
<evidence type="ECO:0000255" key="2"/>
<evidence type="ECO:0000256" key="3">
    <source>
        <dbReference type="SAM" id="MobiDB-lite"/>
    </source>
</evidence>
<evidence type="ECO:0000305" key="4"/>
<protein>
    <recommendedName>
        <fullName>FACT complex subunit ctc-2</fullName>
    </recommendedName>
    <alternativeName>
        <fullName>Chromatin transcription complex 2</fullName>
    </alternativeName>
    <alternativeName>
        <fullName>Facilitates chromatin transcription complex subunit ctc-2</fullName>
    </alternativeName>
</protein>
<gene>
    <name type="primary">ctc-2</name>
    <name type="synonym">spt16</name>
    <name type="ORF">123A4.150</name>
    <name type="ORF">NCU01164</name>
</gene>
<sequence length="1032" mass="118058">MADIKIDSKVFQERVSHFYNAWKADKRSGDALFGGVSSIVILMGKVDENPEFHKNNAIHFWLLGYEFPTTLMLFTLDTIYILTTQKKAKYLDQVKGGRYPVEVLVRGKDAAENEKLFIKITDAIKAAGKKVGVLTKDTSKGPFIDEWKKVYADNCKDVEEVDVAQALSAGAFSVKDETELRAMRTSSKACVALLTPYFLDEMSNILDQDKKIKHSALADKVFNKLEDDKFWKTVELPNRQKLPADLDPEQLDWILGPIVQSGGKFDLKWQADSDNDILHPGIIIAAMGLRYKSYCSQIARTFMVDPNKSQESNYKFLLAVHNLILKEIRDGAIVKDVYTKAYNFVRSKKPDLEKHFLKNVGFGIGLENKDPTLILNNKNTRTLKDGMTLVVTTGFSDIQNPNPQDKNSKVYSLILSDTIRVTSSEPVVFTGEAPVDVDATSFFFKDEEEAQPTPKKEKRDSRVGAVATKNITSTRLRSERNTTVDEDADKRRREHQKELAQKKQKEGLAKYAESTADENGVEIKKFKRFESYKRDNQFPPKVKDMGIVIDQKNATIVLPVMGRPVPFHINTIKNASKSDEGEWSFLRINFLSPGQGVGRKDEQPFEDASAHFVRSLTFKSTDGDRYADIANQISNLKRDAVKKEQEKKDMEDVVEQDKLVEIRNRRPAVLDNVFIRPAMEGKRVPGKVEIHQNGIRYQSPLSTTQRVDILFSNVRHLFFQPCQHELIVIIHIHLKDPIIIGNKKKTKDVQFYREATDIQFDETGNRKRKYRYGDEDEFEAEQEERRRRAELDRLFKSFAEKIAEAGRNEGIEVDMPLRDLGFNGVPFRSNVYIQPTTECLIQITEPPFMVITLEDIEVAHLERVQFGLKNFDLVFVFKDFTRPPYHINTIPVESLEDVKEFLDSSDIAFSEGPLNLNWGVIMKTVTANTHQFFLDGGWGFLQNDSDDDEVEEEEEESAFEIDESELEDASESSEEDSEYDSNASEEASDEAEDSEEEEGEDWDELERKAKKRDRESGFDDEEERAAPKKRRK</sequence>